<reference key="1">
    <citation type="journal article" date="1997" name="Nature">
        <title>The complete genome sequence of the hyperthermophilic, sulphate-reducing archaeon Archaeoglobus fulgidus.</title>
        <authorList>
            <person name="Klenk H.-P."/>
            <person name="Clayton R.A."/>
            <person name="Tomb J.-F."/>
            <person name="White O."/>
            <person name="Nelson K.E."/>
            <person name="Ketchum K.A."/>
            <person name="Dodson R.J."/>
            <person name="Gwinn M.L."/>
            <person name="Hickey E.K."/>
            <person name="Peterson J.D."/>
            <person name="Richardson D.L."/>
            <person name="Kerlavage A.R."/>
            <person name="Graham D.E."/>
            <person name="Kyrpides N.C."/>
            <person name="Fleischmann R.D."/>
            <person name="Quackenbush J."/>
            <person name="Lee N.H."/>
            <person name="Sutton G.G."/>
            <person name="Gill S.R."/>
            <person name="Kirkness E.F."/>
            <person name="Dougherty B.A."/>
            <person name="McKenney K."/>
            <person name="Adams M.D."/>
            <person name="Loftus B.J."/>
            <person name="Peterson S.N."/>
            <person name="Reich C.I."/>
            <person name="McNeil L.K."/>
            <person name="Badger J.H."/>
            <person name="Glodek A."/>
            <person name="Zhou L."/>
            <person name="Overbeek R."/>
            <person name="Gocayne J.D."/>
            <person name="Weidman J.F."/>
            <person name="McDonald L.A."/>
            <person name="Utterback T.R."/>
            <person name="Cotton M.D."/>
            <person name="Spriggs T."/>
            <person name="Artiach P."/>
            <person name="Kaine B.P."/>
            <person name="Sykes S.M."/>
            <person name="Sadow P.W."/>
            <person name="D'Andrea K.P."/>
            <person name="Bowman C."/>
            <person name="Fujii C."/>
            <person name="Garland S.A."/>
            <person name="Mason T.M."/>
            <person name="Olsen G.J."/>
            <person name="Fraser C.M."/>
            <person name="Smith H.O."/>
            <person name="Woese C.R."/>
            <person name="Venter J.C."/>
        </authorList>
    </citation>
    <scope>NUCLEOTIDE SEQUENCE [LARGE SCALE GENOMIC DNA]</scope>
    <source>
        <strain>ATCC 49558 / DSM 4304 / JCM 9628 / NBRC 100126 / VC-16</strain>
    </source>
</reference>
<feature type="chain" id="PRO_0000153491" description="Histidinol-phosphate aminotransferase 2">
    <location>
        <begin position="1"/>
        <end position="342"/>
    </location>
</feature>
<feature type="modified residue" description="N6-(pyridoxal phosphate)lysine" evidence="1">
    <location>
        <position position="206"/>
    </location>
</feature>
<keyword id="KW-0028">Amino-acid biosynthesis</keyword>
<keyword id="KW-0032">Aminotransferase</keyword>
<keyword id="KW-0368">Histidine biosynthesis</keyword>
<keyword id="KW-0663">Pyridoxal phosphate</keyword>
<keyword id="KW-1185">Reference proteome</keyword>
<keyword id="KW-0808">Transferase</keyword>
<protein>
    <recommendedName>
        <fullName>Histidinol-phosphate aminotransferase 2</fullName>
        <ecNumber>2.6.1.9</ecNumber>
    </recommendedName>
    <alternativeName>
        <fullName>Imidazole acetol-phosphate transaminase 2</fullName>
    </alternativeName>
</protein>
<name>HIS82_ARCFU</name>
<organism>
    <name type="scientific">Archaeoglobus fulgidus (strain ATCC 49558 / DSM 4304 / JCM 9628 / NBRC 100126 / VC-16)</name>
    <dbReference type="NCBI Taxonomy" id="224325"/>
    <lineage>
        <taxon>Archaea</taxon>
        <taxon>Methanobacteriati</taxon>
        <taxon>Methanobacteriota</taxon>
        <taxon>Archaeoglobi</taxon>
        <taxon>Archaeoglobales</taxon>
        <taxon>Archaeoglobaceae</taxon>
        <taxon>Archaeoglobus</taxon>
    </lineage>
</organism>
<proteinExistence type="inferred from homology"/>
<dbReference type="EC" id="2.6.1.9"/>
<dbReference type="EMBL" id="AE000782">
    <property type="protein sequence ID" value="AAB89229.1"/>
    <property type="molecule type" value="Genomic_DNA"/>
</dbReference>
<dbReference type="PIR" id="G69502">
    <property type="entry name" value="G69502"/>
</dbReference>
<dbReference type="SMR" id="O28255"/>
<dbReference type="STRING" id="224325.AF_2024"/>
<dbReference type="PaxDb" id="224325-AF_2024"/>
<dbReference type="EnsemblBacteria" id="AAB89229">
    <property type="protein sequence ID" value="AAB89229"/>
    <property type="gene ID" value="AF_2024"/>
</dbReference>
<dbReference type="KEGG" id="afu:AF_2024"/>
<dbReference type="eggNOG" id="arCOG04273">
    <property type="taxonomic scope" value="Archaea"/>
</dbReference>
<dbReference type="HOGENOM" id="CLU_017584_3_1_2"/>
<dbReference type="OrthoDB" id="9929at2157"/>
<dbReference type="PhylomeDB" id="O28255"/>
<dbReference type="UniPathway" id="UPA00031">
    <property type="reaction ID" value="UER00012"/>
</dbReference>
<dbReference type="Proteomes" id="UP000002199">
    <property type="component" value="Chromosome"/>
</dbReference>
<dbReference type="GO" id="GO:0004400">
    <property type="term" value="F:histidinol-phosphate transaminase activity"/>
    <property type="evidence" value="ECO:0007669"/>
    <property type="project" value="UniProtKB-UniRule"/>
</dbReference>
<dbReference type="GO" id="GO:0030170">
    <property type="term" value="F:pyridoxal phosphate binding"/>
    <property type="evidence" value="ECO:0007669"/>
    <property type="project" value="InterPro"/>
</dbReference>
<dbReference type="GO" id="GO:0000105">
    <property type="term" value="P:L-histidine biosynthetic process"/>
    <property type="evidence" value="ECO:0007669"/>
    <property type="project" value="UniProtKB-UniRule"/>
</dbReference>
<dbReference type="CDD" id="cd00609">
    <property type="entry name" value="AAT_like"/>
    <property type="match status" value="1"/>
</dbReference>
<dbReference type="Gene3D" id="3.90.1150.10">
    <property type="entry name" value="Aspartate Aminotransferase, domain 1"/>
    <property type="match status" value="1"/>
</dbReference>
<dbReference type="Gene3D" id="3.40.640.10">
    <property type="entry name" value="Type I PLP-dependent aspartate aminotransferase-like (Major domain)"/>
    <property type="match status" value="1"/>
</dbReference>
<dbReference type="HAMAP" id="MF_01023">
    <property type="entry name" value="HisC_aminotrans_2"/>
    <property type="match status" value="1"/>
</dbReference>
<dbReference type="InterPro" id="IPR004839">
    <property type="entry name" value="Aminotransferase_I/II_large"/>
</dbReference>
<dbReference type="InterPro" id="IPR005861">
    <property type="entry name" value="HisP_aminotrans"/>
</dbReference>
<dbReference type="InterPro" id="IPR004838">
    <property type="entry name" value="NHTrfase_class1_PyrdxlP-BS"/>
</dbReference>
<dbReference type="InterPro" id="IPR015424">
    <property type="entry name" value="PyrdxlP-dep_Trfase"/>
</dbReference>
<dbReference type="InterPro" id="IPR015421">
    <property type="entry name" value="PyrdxlP-dep_Trfase_major"/>
</dbReference>
<dbReference type="InterPro" id="IPR015422">
    <property type="entry name" value="PyrdxlP-dep_Trfase_small"/>
</dbReference>
<dbReference type="NCBIfam" id="TIGR01141">
    <property type="entry name" value="hisC"/>
    <property type="match status" value="1"/>
</dbReference>
<dbReference type="PANTHER" id="PTHR42885:SF2">
    <property type="entry name" value="HISTIDINOL-PHOSPHATE AMINOTRANSFERASE"/>
    <property type="match status" value="1"/>
</dbReference>
<dbReference type="PANTHER" id="PTHR42885">
    <property type="entry name" value="HISTIDINOL-PHOSPHATE AMINOTRANSFERASE-RELATED"/>
    <property type="match status" value="1"/>
</dbReference>
<dbReference type="Pfam" id="PF00155">
    <property type="entry name" value="Aminotran_1_2"/>
    <property type="match status" value="1"/>
</dbReference>
<dbReference type="SUPFAM" id="SSF53383">
    <property type="entry name" value="PLP-dependent transferases"/>
    <property type="match status" value="1"/>
</dbReference>
<sequence length="342" mass="38942">MRDVVRFINPYDPGLFPEDFPDKEVVNLSSNENPYEPSEEVREAYLRAVKYIPRYPKADYARLKKALAEYTGFEVENIAVGCGASELISCICNVLLEELDRVVIPMPSYTLYSIYAMLRSASISFPVFEGYRVDPDVIAEERPKLVFLCSPNNPTGNSLSREIVQKVAESAEYVVLDEAYVEFSDDSKIEMVRDYNNLIVLRSFSKFFGLAGMRVGYAVCSAEIAEAIEKVRLPFGISYPAVETAIAALRSLDYYKKVRDRIVRERERLIEKLKEIEWLEVYPSDANFVLVKANKEGVVEKLAEKGFIVRDASVMGLEGLYIRITVGKREDNDRLIEALREI</sequence>
<evidence type="ECO:0000250" key="1"/>
<evidence type="ECO:0000305" key="2"/>
<gene>
    <name type="primary">hisC2</name>
    <name type="ordered locus">AF_2024</name>
</gene>
<accession>O28255</accession>
<comment type="catalytic activity">
    <reaction>
        <text>L-histidinol phosphate + 2-oxoglutarate = 3-(imidazol-4-yl)-2-oxopropyl phosphate + L-glutamate</text>
        <dbReference type="Rhea" id="RHEA:23744"/>
        <dbReference type="ChEBI" id="CHEBI:16810"/>
        <dbReference type="ChEBI" id="CHEBI:29985"/>
        <dbReference type="ChEBI" id="CHEBI:57766"/>
        <dbReference type="ChEBI" id="CHEBI:57980"/>
        <dbReference type="EC" id="2.6.1.9"/>
    </reaction>
</comment>
<comment type="cofactor">
    <cofactor evidence="1">
        <name>pyridoxal 5'-phosphate</name>
        <dbReference type="ChEBI" id="CHEBI:597326"/>
    </cofactor>
</comment>
<comment type="pathway">
    <text>Amino-acid biosynthesis; L-histidine biosynthesis; L-histidine from 5-phospho-alpha-D-ribose 1-diphosphate: step 7/9.</text>
</comment>
<comment type="similarity">
    <text evidence="2">Belongs to the class-II pyridoxal-phosphate-dependent aminotransferase family. Histidinol-phosphate aminotransferase subfamily.</text>
</comment>